<feature type="chain" id="PRO_0000232591" description="Translation initiation factor IF-2">
    <location>
        <begin position="1"/>
        <end position="602"/>
    </location>
</feature>
<feature type="domain" description="tr-type G">
    <location>
        <begin position="112"/>
        <end position="281"/>
    </location>
</feature>
<feature type="region of interest" description="G1" evidence="1">
    <location>
        <begin position="121"/>
        <end position="128"/>
    </location>
</feature>
<feature type="region of interest" description="G2" evidence="1">
    <location>
        <begin position="146"/>
        <end position="150"/>
    </location>
</feature>
<feature type="region of interest" description="G3" evidence="1">
    <location>
        <begin position="167"/>
        <end position="170"/>
    </location>
</feature>
<feature type="region of interest" description="G4" evidence="1">
    <location>
        <begin position="221"/>
        <end position="224"/>
    </location>
</feature>
<feature type="region of interest" description="G5" evidence="1">
    <location>
        <begin position="257"/>
        <end position="259"/>
    </location>
</feature>
<feature type="binding site" evidence="2">
    <location>
        <begin position="121"/>
        <end position="128"/>
    </location>
    <ligand>
        <name>GTP</name>
        <dbReference type="ChEBI" id="CHEBI:37565"/>
    </ligand>
</feature>
<feature type="binding site" evidence="2">
    <location>
        <begin position="167"/>
        <end position="171"/>
    </location>
    <ligand>
        <name>GTP</name>
        <dbReference type="ChEBI" id="CHEBI:37565"/>
    </ligand>
</feature>
<feature type="binding site" evidence="2">
    <location>
        <begin position="221"/>
        <end position="224"/>
    </location>
    <ligand>
        <name>GTP</name>
        <dbReference type="ChEBI" id="CHEBI:37565"/>
    </ligand>
</feature>
<dbReference type="EMBL" id="AE017245">
    <property type="protein sequence ID" value="AAZ44093.1"/>
    <property type="molecule type" value="Genomic_DNA"/>
</dbReference>
<dbReference type="RefSeq" id="WP_011283822.1">
    <property type="nucleotide sequence ID" value="NC_007294.1"/>
</dbReference>
<dbReference type="SMR" id="Q4A578"/>
<dbReference type="STRING" id="262723.MS53_0686"/>
<dbReference type="GeneID" id="93530486"/>
<dbReference type="KEGG" id="msy:MS53_0686"/>
<dbReference type="eggNOG" id="COG0532">
    <property type="taxonomic scope" value="Bacteria"/>
</dbReference>
<dbReference type="HOGENOM" id="CLU_006301_5_1_14"/>
<dbReference type="OrthoDB" id="9811804at2"/>
<dbReference type="Proteomes" id="UP000000549">
    <property type="component" value="Chromosome"/>
</dbReference>
<dbReference type="GO" id="GO:0005829">
    <property type="term" value="C:cytosol"/>
    <property type="evidence" value="ECO:0007669"/>
    <property type="project" value="TreeGrafter"/>
</dbReference>
<dbReference type="GO" id="GO:0005525">
    <property type="term" value="F:GTP binding"/>
    <property type="evidence" value="ECO:0007669"/>
    <property type="project" value="UniProtKB-KW"/>
</dbReference>
<dbReference type="GO" id="GO:0003924">
    <property type="term" value="F:GTPase activity"/>
    <property type="evidence" value="ECO:0007669"/>
    <property type="project" value="UniProtKB-UniRule"/>
</dbReference>
<dbReference type="GO" id="GO:0003743">
    <property type="term" value="F:translation initiation factor activity"/>
    <property type="evidence" value="ECO:0007669"/>
    <property type="project" value="UniProtKB-UniRule"/>
</dbReference>
<dbReference type="CDD" id="cd01887">
    <property type="entry name" value="IF2_eIF5B"/>
    <property type="match status" value="1"/>
</dbReference>
<dbReference type="CDD" id="cd03702">
    <property type="entry name" value="IF2_mtIF2_II"/>
    <property type="match status" value="1"/>
</dbReference>
<dbReference type="CDD" id="cd03692">
    <property type="entry name" value="mtIF2_IVc"/>
    <property type="match status" value="1"/>
</dbReference>
<dbReference type="FunFam" id="2.40.30.10:FF:000008">
    <property type="entry name" value="Translation initiation factor IF-2"/>
    <property type="match status" value="1"/>
</dbReference>
<dbReference type="FunFam" id="3.40.50.10050:FF:000001">
    <property type="entry name" value="Translation initiation factor IF-2"/>
    <property type="match status" value="1"/>
</dbReference>
<dbReference type="FunFam" id="3.40.50.300:FF:000019">
    <property type="entry name" value="Translation initiation factor IF-2"/>
    <property type="match status" value="1"/>
</dbReference>
<dbReference type="Gene3D" id="3.40.50.300">
    <property type="entry name" value="P-loop containing nucleotide triphosphate hydrolases"/>
    <property type="match status" value="1"/>
</dbReference>
<dbReference type="Gene3D" id="2.40.30.10">
    <property type="entry name" value="Translation factors"/>
    <property type="match status" value="2"/>
</dbReference>
<dbReference type="Gene3D" id="3.40.50.10050">
    <property type="entry name" value="Translation initiation factor IF- 2, domain 3"/>
    <property type="match status" value="1"/>
</dbReference>
<dbReference type="HAMAP" id="MF_00100_B">
    <property type="entry name" value="IF_2_B"/>
    <property type="match status" value="1"/>
</dbReference>
<dbReference type="InterPro" id="IPR053905">
    <property type="entry name" value="EF-G-like_DII"/>
</dbReference>
<dbReference type="InterPro" id="IPR044145">
    <property type="entry name" value="IF2_II"/>
</dbReference>
<dbReference type="InterPro" id="IPR006847">
    <property type="entry name" value="IF2_N"/>
</dbReference>
<dbReference type="InterPro" id="IPR027417">
    <property type="entry name" value="P-loop_NTPase"/>
</dbReference>
<dbReference type="InterPro" id="IPR005225">
    <property type="entry name" value="Small_GTP-bd"/>
</dbReference>
<dbReference type="InterPro" id="IPR000795">
    <property type="entry name" value="T_Tr_GTP-bd_dom"/>
</dbReference>
<dbReference type="InterPro" id="IPR000178">
    <property type="entry name" value="TF_IF2_bacterial-like"/>
</dbReference>
<dbReference type="InterPro" id="IPR015760">
    <property type="entry name" value="TIF_IF2"/>
</dbReference>
<dbReference type="InterPro" id="IPR023115">
    <property type="entry name" value="TIF_IF2_dom3"/>
</dbReference>
<dbReference type="InterPro" id="IPR036925">
    <property type="entry name" value="TIF_IF2_dom3_sf"/>
</dbReference>
<dbReference type="InterPro" id="IPR009000">
    <property type="entry name" value="Transl_B-barrel_sf"/>
</dbReference>
<dbReference type="NCBIfam" id="TIGR00487">
    <property type="entry name" value="IF-2"/>
    <property type="match status" value="1"/>
</dbReference>
<dbReference type="NCBIfam" id="TIGR00231">
    <property type="entry name" value="small_GTP"/>
    <property type="match status" value="1"/>
</dbReference>
<dbReference type="PANTHER" id="PTHR43381:SF5">
    <property type="entry name" value="TR-TYPE G DOMAIN-CONTAINING PROTEIN"/>
    <property type="match status" value="1"/>
</dbReference>
<dbReference type="PANTHER" id="PTHR43381">
    <property type="entry name" value="TRANSLATION INITIATION FACTOR IF-2-RELATED"/>
    <property type="match status" value="1"/>
</dbReference>
<dbReference type="Pfam" id="PF22042">
    <property type="entry name" value="EF-G_D2"/>
    <property type="match status" value="1"/>
</dbReference>
<dbReference type="Pfam" id="PF00009">
    <property type="entry name" value="GTP_EFTU"/>
    <property type="match status" value="1"/>
</dbReference>
<dbReference type="Pfam" id="PF11987">
    <property type="entry name" value="IF-2"/>
    <property type="match status" value="1"/>
</dbReference>
<dbReference type="Pfam" id="PF04760">
    <property type="entry name" value="IF2_N"/>
    <property type="match status" value="1"/>
</dbReference>
<dbReference type="SUPFAM" id="SSF52156">
    <property type="entry name" value="Initiation factor IF2/eIF5b, domain 3"/>
    <property type="match status" value="1"/>
</dbReference>
<dbReference type="SUPFAM" id="SSF52540">
    <property type="entry name" value="P-loop containing nucleoside triphosphate hydrolases"/>
    <property type="match status" value="1"/>
</dbReference>
<dbReference type="SUPFAM" id="SSF50447">
    <property type="entry name" value="Translation proteins"/>
    <property type="match status" value="2"/>
</dbReference>
<dbReference type="PROSITE" id="PS51722">
    <property type="entry name" value="G_TR_2"/>
    <property type="match status" value="1"/>
</dbReference>
<accession>Q4A578</accession>
<gene>
    <name evidence="2" type="primary">infB</name>
    <name type="ordered locus">MS53_0686</name>
</gene>
<name>IF2_MYCS5</name>
<proteinExistence type="inferred from homology"/>
<sequence>MSKKKTNRKNNIDDIKNQLQNAKTELKNGTFFFTGKMSIFEFANKTNLNANEIVKNFFLAGKLYNINHILEEEEIAQLCIENNFEFSKETKIDGTNFLDEISFEDKPEDLIKRAPIITIMGHVDHGKTSLIDKIRNSNITKSESSGITQHTGAYQIVHKNQKITFIDTPGHEAFSAMRARGANVTDIVVLVVAADDGVMPQTVEAIKHCKNANVPIIVFVNKMDKPNKDLDKLKGQLAENGVVIEEYGGSVQTAYGSALKNEGIKELFDEILLLCEVLDLKANPKRFPIGTVIESRVDKRIGALTTIIVQNGTLYKGDFLLVGSQYSKIRTLSDENGNAMDSIEPGCPAVVTGFKIPPTAGSKFVGINDEKFAKRLASEKNYQEKINNLYSLSNSNNNSGGKKVINVIIKSDTNGTAEAIKNQLEYLENDEAKIKVISSNVGDITENDLMLAKASDSIIFTFNLKVLPTIRENLKVKKITLISHNVIYKIIEDCKLILDEHVTPIYEEKKIGQAHVIKIFTYSKLGTIAGSMQDTGVVRLGAKVKVYRKNKLIHEGFVQTLKRNLNEVKEVEKGKDFGTHLKDFNNIEVDDVLEFYEDVRVN</sequence>
<comment type="function">
    <text evidence="2">One of the essential components for the initiation of protein synthesis. Protects formylmethionyl-tRNA from spontaneous hydrolysis and promotes its binding to the 30S ribosomal subunits. Also involved in the hydrolysis of GTP during the formation of the 70S ribosomal complex.</text>
</comment>
<comment type="subcellular location">
    <subcellularLocation>
        <location evidence="2">Cytoplasm</location>
    </subcellularLocation>
</comment>
<comment type="similarity">
    <text evidence="2">Belongs to the TRAFAC class translation factor GTPase superfamily. Classic translation factor GTPase family. IF-2 subfamily.</text>
</comment>
<organism>
    <name type="scientific">Mycoplasmopsis synoviae (strain 53)</name>
    <name type="common">Mycoplasma synoviae</name>
    <dbReference type="NCBI Taxonomy" id="262723"/>
    <lineage>
        <taxon>Bacteria</taxon>
        <taxon>Bacillati</taxon>
        <taxon>Mycoplasmatota</taxon>
        <taxon>Mycoplasmoidales</taxon>
        <taxon>Metamycoplasmataceae</taxon>
        <taxon>Mycoplasmopsis</taxon>
    </lineage>
</organism>
<keyword id="KW-0963">Cytoplasm</keyword>
<keyword id="KW-0342">GTP-binding</keyword>
<keyword id="KW-0396">Initiation factor</keyword>
<keyword id="KW-0547">Nucleotide-binding</keyword>
<keyword id="KW-0648">Protein biosynthesis</keyword>
<keyword id="KW-1185">Reference proteome</keyword>
<protein>
    <recommendedName>
        <fullName evidence="2">Translation initiation factor IF-2</fullName>
    </recommendedName>
</protein>
<reference key="1">
    <citation type="journal article" date="2005" name="J. Bacteriol.">
        <title>Swine and poultry pathogens: the complete genome sequences of two strains of Mycoplasma hyopneumoniae and a strain of Mycoplasma synoviae.</title>
        <authorList>
            <person name="Vasconcelos A.T.R."/>
            <person name="Ferreira H.B."/>
            <person name="Bizarro C.V."/>
            <person name="Bonatto S.L."/>
            <person name="Carvalho M.O."/>
            <person name="Pinto P.M."/>
            <person name="Almeida D.F."/>
            <person name="Almeida L.G.P."/>
            <person name="Almeida R."/>
            <person name="Alves-Junior L."/>
            <person name="Assuncao E.N."/>
            <person name="Azevedo V.A.C."/>
            <person name="Bogo M.R."/>
            <person name="Brigido M.M."/>
            <person name="Brocchi M."/>
            <person name="Burity H.A."/>
            <person name="Camargo A.A."/>
            <person name="Camargo S.S."/>
            <person name="Carepo M.S."/>
            <person name="Carraro D.M."/>
            <person name="de Mattos Cascardo J.C."/>
            <person name="Castro L.A."/>
            <person name="Cavalcanti G."/>
            <person name="Chemale G."/>
            <person name="Collevatti R.G."/>
            <person name="Cunha C.W."/>
            <person name="Dallagiovanna B."/>
            <person name="Dambros B.P."/>
            <person name="Dellagostin O.A."/>
            <person name="Falcao C."/>
            <person name="Fantinatti-Garboggini F."/>
            <person name="Felipe M.S.S."/>
            <person name="Fiorentin L."/>
            <person name="Franco G.R."/>
            <person name="Freitas N.S.A."/>
            <person name="Frias D."/>
            <person name="Grangeiro T.B."/>
            <person name="Grisard E.C."/>
            <person name="Guimaraes C.T."/>
            <person name="Hungria M."/>
            <person name="Jardim S.N."/>
            <person name="Krieger M.A."/>
            <person name="Laurino J.P."/>
            <person name="Lima L.F.A."/>
            <person name="Lopes M.I."/>
            <person name="Loreto E.L.S."/>
            <person name="Madeira H.M.F."/>
            <person name="Manfio G.P."/>
            <person name="Maranhao A.Q."/>
            <person name="Martinkovics C.T."/>
            <person name="Medeiros S.R.B."/>
            <person name="Moreira M.A.M."/>
            <person name="Neiva M."/>
            <person name="Ramalho-Neto C.E."/>
            <person name="Nicolas M.F."/>
            <person name="Oliveira S.C."/>
            <person name="Paixao R.F.C."/>
            <person name="Pedrosa F.O."/>
            <person name="Pena S.D.J."/>
            <person name="Pereira M."/>
            <person name="Pereira-Ferrari L."/>
            <person name="Piffer I."/>
            <person name="Pinto L.S."/>
            <person name="Potrich D.P."/>
            <person name="Salim A.C.M."/>
            <person name="Santos F.R."/>
            <person name="Schmitt R."/>
            <person name="Schneider M.P.C."/>
            <person name="Schrank A."/>
            <person name="Schrank I.S."/>
            <person name="Schuck A.F."/>
            <person name="Seuanez H.N."/>
            <person name="Silva D.W."/>
            <person name="Silva R."/>
            <person name="Silva S.C."/>
            <person name="Soares C.M.A."/>
            <person name="Souza K.R.L."/>
            <person name="Souza R.C."/>
            <person name="Staats C.C."/>
            <person name="Steffens M.B.R."/>
            <person name="Teixeira S.M.R."/>
            <person name="Urmenyi T.P."/>
            <person name="Vainstein M.H."/>
            <person name="Zuccherato L.W."/>
            <person name="Simpson A.J.G."/>
            <person name="Zaha A."/>
        </authorList>
    </citation>
    <scope>NUCLEOTIDE SEQUENCE [LARGE SCALE GENOMIC DNA]</scope>
    <source>
        <strain>53</strain>
    </source>
</reference>
<evidence type="ECO:0000250" key="1"/>
<evidence type="ECO:0000255" key="2">
    <source>
        <dbReference type="HAMAP-Rule" id="MF_00100"/>
    </source>
</evidence>